<protein>
    <recommendedName>
        <fullName>Protein N-lysine methyltransferase METTL21A</fullName>
        <ecNumber evidence="3 4 5">2.1.1.-</ecNumber>
    </recommendedName>
    <alternativeName>
        <fullName evidence="9">HSPA lysine methyltransferase</fullName>
    </alternativeName>
    <alternativeName>
        <fullName evidence="9">HSPA-KMT</fullName>
    </alternativeName>
    <alternativeName>
        <fullName evidence="10">Hepatocellular carcinoma-associated antigen 557b</fullName>
    </alternativeName>
    <alternativeName>
        <fullName>Methyltransferase-like protein 21A</fullName>
    </alternativeName>
</protein>
<feature type="chain" id="PRO_0000292033" description="Protein N-lysine methyltransferase METTL21A">
    <location>
        <begin position="1"/>
        <end position="218"/>
    </location>
</feature>
<feature type="binding site" evidence="7">
    <location>
        <position position="47"/>
    </location>
    <ligand>
        <name>S-adenosyl-L-methionine</name>
        <dbReference type="ChEBI" id="CHEBI:59789"/>
    </ligand>
</feature>
<feature type="binding site" evidence="7">
    <location>
        <begin position="73"/>
        <end position="75"/>
    </location>
    <ligand>
        <name>S-adenosyl-L-methionine</name>
        <dbReference type="ChEBI" id="CHEBI:59789"/>
    </ligand>
</feature>
<feature type="binding site" evidence="7">
    <location>
        <position position="94"/>
    </location>
    <ligand>
        <name>S-adenosyl-L-methionine</name>
        <dbReference type="ChEBI" id="CHEBI:59789"/>
    </ligand>
</feature>
<feature type="binding site" evidence="7">
    <location>
        <position position="125"/>
    </location>
    <ligand>
        <name>S-adenosyl-L-methionine</name>
        <dbReference type="ChEBI" id="CHEBI:59789"/>
    </ligand>
</feature>
<feature type="binding site" evidence="7">
    <location>
        <position position="143"/>
    </location>
    <ligand>
        <name>S-adenosyl-L-methionine</name>
        <dbReference type="ChEBI" id="CHEBI:59789"/>
    </ligand>
</feature>
<feature type="splice variant" id="VSP_026379" description="In isoform 2." evidence="8">
    <original>AHV</original>
    <variation>GGI</variation>
    <location>
        <begin position="88"/>
        <end position="90"/>
    </location>
</feature>
<feature type="splice variant" id="VSP_026380" description="In isoform 2." evidence="8">
    <location>
        <begin position="91"/>
        <end position="218"/>
    </location>
</feature>
<feature type="sequence variant" id="VAR_032935" description="In dbSNP:rs2551949." evidence="1 2 6">
    <original>T</original>
    <variation>I</variation>
    <location>
        <position position="192"/>
    </location>
</feature>
<feature type="mutagenesis site" description="Abolishes methyltransferase activity." evidence="3">
    <original>D</original>
    <variation>A</variation>
    <location>
        <position position="94"/>
    </location>
</feature>
<feature type="sequence conflict" description="In Ref. 2; BAC04229." evidence="11" ref="2">
    <original>I</original>
    <variation>T</variation>
    <location>
        <position position="33"/>
    </location>
</feature>
<feature type="helix" evidence="13">
    <location>
        <begin position="16"/>
        <end position="18"/>
    </location>
</feature>
<feature type="strand" evidence="13">
    <location>
        <begin position="19"/>
        <end position="26"/>
    </location>
</feature>
<feature type="strand" evidence="13">
    <location>
        <begin position="29"/>
        <end position="34"/>
    </location>
</feature>
<feature type="turn" evidence="13">
    <location>
        <begin position="37"/>
        <end position="40"/>
    </location>
</feature>
<feature type="helix" evidence="13">
    <location>
        <begin position="42"/>
        <end position="44"/>
    </location>
</feature>
<feature type="helix" evidence="13">
    <location>
        <begin position="48"/>
        <end position="58"/>
    </location>
</feature>
<feature type="strand" evidence="13">
    <location>
        <begin position="68"/>
        <end position="73"/>
    </location>
</feature>
<feature type="helix" evidence="13">
    <location>
        <begin position="78"/>
        <end position="85"/>
    </location>
</feature>
<feature type="strand" evidence="13">
    <location>
        <begin position="89"/>
        <end position="94"/>
    </location>
</feature>
<feature type="helix" evidence="13">
    <location>
        <begin position="96"/>
        <end position="107"/>
    </location>
</feature>
<feature type="helix" evidence="13">
    <location>
        <begin position="112"/>
        <end position="115"/>
    </location>
</feature>
<feature type="strand" evidence="13">
    <location>
        <begin position="119"/>
        <end position="122"/>
    </location>
</feature>
<feature type="helix" evidence="13">
    <location>
        <begin position="129"/>
        <end position="131"/>
    </location>
</feature>
<feature type="strand" evidence="13">
    <location>
        <begin position="138"/>
        <end position="144"/>
    </location>
</feature>
<feature type="helix" evidence="13">
    <location>
        <begin position="149"/>
        <end position="151"/>
    </location>
</feature>
<feature type="helix" evidence="13">
    <location>
        <begin position="152"/>
        <end position="162"/>
    </location>
</feature>
<feature type="strand" evidence="13">
    <location>
        <begin position="168"/>
        <end position="173"/>
    </location>
</feature>
<feature type="helix" evidence="13">
    <location>
        <begin position="178"/>
        <end position="190"/>
    </location>
</feature>
<feature type="strand" evidence="13">
    <location>
        <begin position="191"/>
        <end position="199"/>
    </location>
</feature>
<feature type="turn" evidence="13">
    <location>
        <begin position="200"/>
        <end position="203"/>
    </location>
</feature>
<feature type="strand" evidence="13">
    <location>
        <begin position="204"/>
        <end position="212"/>
    </location>
</feature>
<comment type="function">
    <text evidence="3 4 5">Protein-lysine methyltransferase that selectively trimethylates residues in heat shock protein 70 (HSP70) family members. Contributes to the in vivo trimethylation of Lys residues in HSPA1 and HSPA8. In vitro methylates 'Lys-561' in HSPA1, 'Lys-564' in HSPA2, 'Lys-585' in HSPA5, 'Lys-563' in HSPA6 and 'Lys-561' in HSPA8.</text>
</comment>
<comment type="catalytic activity">
    <reaction evidence="3 4 5">
        <text>L-lysyl-[protein] + 3 S-adenosyl-L-methionine = N(6),N(6),N(6)-trimethyl-L-lysyl-[protein] + 3 S-adenosyl-L-homocysteine + 3 H(+)</text>
        <dbReference type="Rhea" id="RHEA:54192"/>
        <dbReference type="Rhea" id="RHEA-COMP:9752"/>
        <dbReference type="Rhea" id="RHEA-COMP:13826"/>
        <dbReference type="ChEBI" id="CHEBI:15378"/>
        <dbReference type="ChEBI" id="CHEBI:29969"/>
        <dbReference type="ChEBI" id="CHEBI:57856"/>
        <dbReference type="ChEBI" id="CHEBI:59789"/>
        <dbReference type="ChEBI" id="CHEBI:61961"/>
    </reaction>
    <physiologicalReaction direction="left-to-right" evidence="12">
        <dbReference type="Rhea" id="RHEA:54193"/>
    </physiologicalReaction>
</comment>
<comment type="subunit">
    <text evidence="4 5 7">Interacts with heat shock protein 70 family members; at least some of these proteins are methylation substrates (PubMed:23349634, PubMed:23921388).</text>
</comment>
<comment type="interaction">
    <interactant intactId="EBI-8652459">
        <id>Q8WXB1</id>
    </interactant>
    <interactant intactId="EBI-351872">
        <id>P59998</id>
        <label>ARPC4</label>
    </interactant>
    <organismsDiffer>false</organismsDiffer>
    <experiments>3</experiments>
</comment>
<comment type="interaction">
    <interactant intactId="EBI-8652459">
        <id>Q8WXB1</id>
    </interactant>
    <interactant intactId="EBI-747353">
        <id>Q8WXE1</id>
        <label>ATRIP</label>
    </interactant>
    <organismsDiffer>false</organismsDiffer>
    <experiments>3</experiments>
</comment>
<comment type="interaction">
    <interactant intactId="EBI-8652459">
        <id>Q8WXB1</id>
    </interactant>
    <interactant intactId="EBI-7186123">
        <id>Q8IZ13</id>
        <label>FAM200C</label>
    </interactant>
    <organismsDiffer>false</organismsDiffer>
    <experiments>8</experiments>
</comment>
<comment type="interaction">
    <interactant intactId="EBI-8652459">
        <id>Q8WXB1</id>
    </interactant>
    <interactant intactId="EBI-739832">
        <id>Q8TBB1</id>
        <label>LNX1</label>
    </interactant>
    <organismsDiffer>false</organismsDiffer>
    <experiments>4</experiments>
</comment>
<comment type="interaction">
    <interactant intactId="EBI-8652459">
        <id>Q8WXB1</id>
    </interactant>
    <interactant intactId="EBI-1216080">
        <id>Q9Y250</id>
        <label>LZTS1</label>
    </interactant>
    <organismsDiffer>false</organismsDiffer>
    <experiments>3</experiments>
</comment>
<comment type="interaction">
    <interactant intactId="EBI-8652459">
        <id>Q8WXB1</id>
    </interactant>
    <interactant intactId="EBI-19944212">
        <id>A8MW99</id>
        <label>MEI4</label>
    </interactant>
    <organismsDiffer>false</organismsDiffer>
    <experiments>3</experiments>
</comment>
<comment type="interaction">
    <interactant intactId="EBI-8652459">
        <id>Q8WXB1</id>
    </interactant>
    <interactant intactId="EBI-16439278">
        <id>Q6FHY5</id>
        <label>MEOX2</label>
    </interactant>
    <organismsDiffer>false</organismsDiffer>
    <experiments>3</experiments>
</comment>
<comment type="interaction">
    <interactant intactId="EBI-8652459">
        <id>Q8WXB1</id>
    </interactant>
    <interactant intactId="EBI-10699187">
        <id>Q8IXL7-2</id>
        <label>MSRB3</label>
    </interactant>
    <organismsDiffer>false</organismsDiffer>
    <experiments>3</experiments>
</comment>
<comment type="interaction">
    <interactant intactId="EBI-8652459">
        <id>Q8WXB1</id>
    </interactant>
    <interactant intactId="EBI-357275">
        <id>Q99471</id>
        <label>PFDN5</label>
    </interactant>
    <organismsDiffer>false</organismsDiffer>
    <experiments>3</experiments>
</comment>
<comment type="interaction">
    <interactant intactId="EBI-8652459">
        <id>Q8WXB1</id>
    </interactant>
    <interactant intactId="EBI-4395669">
        <id>Q6ZNG0</id>
        <label>ZNF620</label>
    </interactant>
    <organismsDiffer>false</organismsDiffer>
    <experiments>3</experiments>
</comment>
<comment type="interaction">
    <interactant intactId="EBI-8652459">
        <id>Q8WXB1</id>
    </interactant>
    <interactant intactId="EBI-625509">
        <id>Q8N720</id>
        <label>ZNF655</label>
    </interactant>
    <organismsDiffer>false</organismsDiffer>
    <experiments>3</experiments>
</comment>
<comment type="interaction">
    <interactant intactId="EBI-8652459">
        <id>Q8WXB1</id>
    </interactant>
    <interactant intactId="EBI-527853">
        <id>Q9UGI0</id>
        <label>ZRANB1</label>
    </interactant>
    <organismsDiffer>false</organismsDiffer>
    <experiments>3</experiments>
</comment>
<comment type="subcellular location">
    <subcellularLocation>
        <location evidence="4">Cytoplasm</location>
    </subcellularLocation>
</comment>
<comment type="alternative products">
    <event type="alternative splicing"/>
    <isoform>
        <id>Q8WXB1-1</id>
        <name>1</name>
        <sequence type="displayed"/>
    </isoform>
    <isoform>
        <id>Q8WXB1-2</id>
        <name>2</name>
        <sequence type="described" ref="VSP_026379 VSP_026380"/>
    </isoform>
</comment>
<comment type="similarity">
    <text evidence="11">Belongs to the methyltransferase superfamily. METTL21 family.</text>
</comment>
<organism>
    <name type="scientific">Homo sapiens</name>
    <name type="common">Human</name>
    <dbReference type="NCBI Taxonomy" id="9606"/>
    <lineage>
        <taxon>Eukaryota</taxon>
        <taxon>Metazoa</taxon>
        <taxon>Chordata</taxon>
        <taxon>Craniata</taxon>
        <taxon>Vertebrata</taxon>
        <taxon>Euteleostomi</taxon>
        <taxon>Mammalia</taxon>
        <taxon>Eutheria</taxon>
        <taxon>Euarchontoglires</taxon>
        <taxon>Primates</taxon>
        <taxon>Haplorrhini</taxon>
        <taxon>Catarrhini</taxon>
        <taxon>Hominidae</taxon>
        <taxon>Homo</taxon>
    </lineage>
</organism>
<evidence type="ECO:0000269" key="1">
    <source>
    </source>
</evidence>
<evidence type="ECO:0000269" key="2">
    <source>
    </source>
</evidence>
<evidence type="ECO:0000269" key="3">
    <source>
    </source>
</evidence>
<evidence type="ECO:0000269" key="4">
    <source>
    </source>
</evidence>
<evidence type="ECO:0000269" key="5">
    <source>
    </source>
</evidence>
<evidence type="ECO:0000269" key="6">
    <source ref="1"/>
</evidence>
<evidence type="ECO:0000269" key="7">
    <source ref="8"/>
</evidence>
<evidence type="ECO:0000303" key="8">
    <source>
    </source>
</evidence>
<evidence type="ECO:0000303" key="9">
    <source>
    </source>
</evidence>
<evidence type="ECO:0000303" key="10">
    <source ref="1"/>
</evidence>
<evidence type="ECO:0000305" key="11"/>
<evidence type="ECO:0000305" key="12">
    <source>
    </source>
</evidence>
<evidence type="ECO:0007829" key="13">
    <source>
        <dbReference type="PDB" id="4LEC"/>
    </source>
</evidence>
<dbReference type="EC" id="2.1.1.-" evidence="3 4 5"/>
<dbReference type="EMBL" id="AF455817">
    <property type="protein sequence ID" value="AAL66295.1"/>
    <property type="molecule type" value="mRNA"/>
</dbReference>
<dbReference type="EMBL" id="AK093812">
    <property type="protein sequence ID" value="BAC04229.1"/>
    <property type="molecule type" value="mRNA"/>
</dbReference>
<dbReference type="EMBL" id="AC079767">
    <property type="protein sequence ID" value="AAX93175.1"/>
    <property type="molecule type" value="Genomic_DNA"/>
</dbReference>
<dbReference type="EMBL" id="BC009462">
    <property type="protein sequence ID" value="AAH09462.1"/>
    <property type="molecule type" value="mRNA"/>
</dbReference>
<dbReference type="EMBL" id="BC033720">
    <property type="protein sequence ID" value="AAH33720.1"/>
    <property type="molecule type" value="mRNA"/>
</dbReference>
<dbReference type="CCDS" id="CCDS2376.1">
    <molecule id="Q8WXB1-1"/>
</dbReference>
<dbReference type="CCDS" id="CCDS82562.1">
    <molecule id="Q8WXB1-2"/>
</dbReference>
<dbReference type="RefSeq" id="NP_001120867.1">
    <molecule id="Q8WXB1-1"/>
    <property type="nucleotide sequence ID" value="NM_001127395.5"/>
</dbReference>
<dbReference type="RefSeq" id="NP_001294950.1">
    <property type="nucleotide sequence ID" value="NM_001308021.2"/>
</dbReference>
<dbReference type="RefSeq" id="NP_001317059.1">
    <molecule id="Q8WXB1-1"/>
    <property type="nucleotide sequence ID" value="NM_001330130.2"/>
</dbReference>
<dbReference type="RefSeq" id="NP_001317060.1">
    <molecule id="Q8WXB1-2"/>
    <property type="nucleotide sequence ID" value="NM_001330131.2"/>
</dbReference>
<dbReference type="RefSeq" id="NP_001317062.1">
    <molecule id="Q8WXB1-2"/>
    <property type="nucleotide sequence ID" value="NM_001330133.3"/>
</dbReference>
<dbReference type="RefSeq" id="NP_001317063.1">
    <molecule id="Q8WXB1-1"/>
    <property type="nucleotide sequence ID" value="NM_001330134.2"/>
</dbReference>
<dbReference type="RefSeq" id="NP_001317064.1">
    <molecule id="Q8WXB1-2"/>
    <property type="nucleotide sequence ID" value="NM_001330135.2"/>
</dbReference>
<dbReference type="RefSeq" id="NP_001380502.1">
    <molecule id="Q8WXB1-2"/>
    <property type="nucleotide sequence ID" value="NM_001393573.1"/>
</dbReference>
<dbReference type="RefSeq" id="NP_001380503.1">
    <molecule id="Q8WXB1-2"/>
    <property type="nucleotide sequence ID" value="NM_001393574.1"/>
</dbReference>
<dbReference type="RefSeq" id="NP_001380504.1">
    <molecule id="Q8WXB1-2"/>
    <property type="nucleotide sequence ID" value="NM_001393575.1"/>
</dbReference>
<dbReference type="RefSeq" id="NP_660323.3">
    <molecule id="Q8WXB1-1"/>
    <property type="nucleotide sequence ID" value="NM_145280.6"/>
</dbReference>
<dbReference type="RefSeq" id="XP_005246396.1">
    <property type="nucleotide sequence ID" value="XM_005246339.3"/>
</dbReference>
<dbReference type="RefSeq" id="XP_005246397.1">
    <property type="nucleotide sequence ID" value="XM_005246340.3"/>
</dbReference>
<dbReference type="RefSeq" id="XP_024308490.1">
    <molecule id="Q8WXB1-1"/>
    <property type="nucleotide sequence ID" value="XM_024452722.2"/>
</dbReference>
<dbReference type="RefSeq" id="XP_054196724.1">
    <molecule id="Q8WXB1-1"/>
    <property type="nucleotide sequence ID" value="XM_054340749.1"/>
</dbReference>
<dbReference type="PDB" id="4LEC">
    <property type="method" value="X-ray"/>
    <property type="resolution" value="2.28 A"/>
    <property type="chains" value="A/B=8-218"/>
</dbReference>
<dbReference type="PDBsum" id="4LEC"/>
<dbReference type="SMR" id="Q8WXB1"/>
<dbReference type="BioGRID" id="127352">
    <property type="interactions" value="41"/>
</dbReference>
<dbReference type="FunCoup" id="Q8WXB1">
    <property type="interactions" value="1941"/>
</dbReference>
<dbReference type="IntAct" id="Q8WXB1">
    <property type="interactions" value="22"/>
</dbReference>
<dbReference type="MINT" id="Q8WXB1"/>
<dbReference type="STRING" id="9606.ENSP00000272839"/>
<dbReference type="ChEMBL" id="CHEMBL3588741"/>
<dbReference type="iPTMnet" id="Q8WXB1"/>
<dbReference type="PhosphoSitePlus" id="Q8WXB1"/>
<dbReference type="BioMuta" id="METTL21A"/>
<dbReference type="DMDM" id="150382834"/>
<dbReference type="jPOST" id="Q8WXB1"/>
<dbReference type="MassIVE" id="Q8WXB1"/>
<dbReference type="PaxDb" id="9606-ENSP00000415115"/>
<dbReference type="PeptideAtlas" id="Q8WXB1"/>
<dbReference type="ProteomicsDB" id="75001">
    <molecule id="Q8WXB1-1"/>
</dbReference>
<dbReference type="ProteomicsDB" id="75002">
    <molecule id="Q8WXB1-2"/>
</dbReference>
<dbReference type="Pumba" id="Q8WXB1"/>
<dbReference type="Antibodypedia" id="34188">
    <property type="antibodies" value="184 antibodies from 21 providers"/>
</dbReference>
<dbReference type="DNASU" id="151194"/>
<dbReference type="Ensembl" id="ENST00000406927.6">
    <molecule id="Q8WXB1-1"/>
    <property type="protein sequence ID" value="ENSP00000385481.2"/>
    <property type="gene ID" value="ENSG00000144401.14"/>
</dbReference>
<dbReference type="Ensembl" id="ENST00000411432.6">
    <molecule id="Q8WXB1-1"/>
    <property type="protein sequence ID" value="ENSP00000415115.1"/>
    <property type="gene ID" value="ENSG00000144401.14"/>
</dbReference>
<dbReference type="Ensembl" id="ENST00000425132.5">
    <molecule id="Q8WXB1-2"/>
    <property type="protein sequence ID" value="ENSP00000400730.1"/>
    <property type="gene ID" value="ENSG00000144401.14"/>
</dbReference>
<dbReference type="Ensembl" id="ENST00000426075.5">
    <molecule id="Q8WXB1-1"/>
    <property type="protein sequence ID" value="ENSP00000403317.1"/>
    <property type="gene ID" value="ENSG00000144401.14"/>
</dbReference>
<dbReference type="Ensembl" id="ENST00000442521.1">
    <molecule id="Q8WXB1-1"/>
    <property type="protein sequence ID" value="ENSP00000392062.1"/>
    <property type="gene ID" value="ENSG00000144401.14"/>
</dbReference>
<dbReference type="Ensembl" id="ENST00000448007.6">
    <molecule id="Q8WXB1-1"/>
    <property type="protein sequence ID" value="ENSP00000407622.2"/>
    <property type="gene ID" value="ENSG00000144401.14"/>
</dbReference>
<dbReference type="Ensembl" id="ENST00000458426.5">
    <molecule id="Q8WXB1-2"/>
    <property type="protein sequence ID" value="ENSP00000389684.1"/>
    <property type="gene ID" value="ENSG00000144401.14"/>
</dbReference>
<dbReference type="GeneID" id="151194"/>
<dbReference type="KEGG" id="hsa:151194"/>
<dbReference type="MANE-Select" id="ENST00000411432.6">
    <property type="protein sequence ID" value="ENSP00000415115.1"/>
    <property type="RefSeq nucleotide sequence ID" value="NM_001127395.5"/>
    <property type="RefSeq protein sequence ID" value="NP_001120867.1"/>
</dbReference>
<dbReference type="UCSC" id="uc002vce.4">
    <molecule id="Q8WXB1-1"/>
    <property type="organism name" value="human"/>
</dbReference>
<dbReference type="AGR" id="HGNC:30476"/>
<dbReference type="CTD" id="151194"/>
<dbReference type="DisGeNET" id="151194"/>
<dbReference type="GeneCards" id="METTL21A"/>
<dbReference type="HGNC" id="HGNC:30476">
    <property type="gene designation" value="METTL21A"/>
</dbReference>
<dbReference type="HPA" id="ENSG00000144401">
    <property type="expression patterns" value="Low tissue specificity"/>
</dbReference>
<dbReference type="MIM" id="615257">
    <property type="type" value="gene"/>
</dbReference>
<dbReference type="neXtProt" id="NX_Q8WXB1"/>
<dbReference type="OpenTargets" id="ENSG00000144401"/>
<dbReference type="PharmGKB" id="PA145008433"/>
<dbReference type="VEuPathDB" id="HostDB:ENSG00000144401"/>
<dbReference type="eggNOG" id="KOG2793">
    <property type="taxonomic scope" value="Eukaryota"/>
</dbReference>
<dbReference type="GeneTree" id="ENSGT00940000157249"/>
<dbReference type="HOGENOM" id="CLU_055721_4_2_1"/>
<dbReference type="InParanoid" id="Q8WXB1"/>
<dbReference type="OrthoDB" id="413520at2759"/>
<dbReference type="PAN-GO" id="Q8WXB1">
    <property type="GO annotations" value="4 GO annotations based on evolutionary models"/>
</dbReference>
<dbReference type="PhylomeDB" id="Q8WXB1"/>
<dbReference type="TreeFam" id="TF313206"/>
<dbReference type="PathwayCommons" id="Q8WXB1"/>
<dbReference type="Reactome" id="R-HSA-8876725">
    <property type="pathway name" value="Protein methylation"/>
</dbReference>
<dbReference type="SignaLink" id="Q8WXB1"/>
<dbReference type="BioGRID-ORCS" id="151194">
    <property type="hits" value="11 hits in 1159 CRISPR screens"/>
</dbReference>
<dbReference type="ChiTaRS" id="METTL21A">
    <property type="organism name" value="human"/>
</dbReference>
<dbReference type="EvolutionaryTrace" id="Q8WXB1"/>
<dbReference type="GenomeRNAi" id="151194"/>
<dbReference type="Pharos" id="Q8WXB1">
    <property type="development level" value="Tbio"/>
</dbReference>
<dbReference type="PRO" id="PR:Q8WXB1"/>
<dbReference type="Proteomes" id="UP000005640">
    <property type="component" value="Chromosome 2"/>
</dbReference>
<dbReference type="RNAct" id="Q8WXB1">
    <property type="molecule type" value="protein"/>
</dbReference>
<dbReference type="Bgee" id="ENSG00000144401">
    <property type="expression patterns" value="Expressed in oocyte and 176 other cell types or tissues"/>
</dbReference>
<dbReference type="ExpressionAtlas" id="Q8WXB1">
    <property type="expression patterns" value="baseline and differential"/>
</dbReference>
<dbReference type="GO" id="GO:0005829">
    <property type="term" value="C:cytosol"/>
    <property type="evidence" value="ECO:0000318"/>
    <property type="project" value="GO_Central"/>
</dbReference>
<dbReference type="GO" id="GO:0005654">
    <property type="term" value="C:nucleoplasm"/>
    <property type="evidence" value="ECO:0000304"/>
    <property type="project" value="Reactome"/>
</dbReference>
<dbReference type="GO" id="GO:0032991">
    <property type="term" value="C:protein-containing complex"/>
    <property type="evidence" value="ECO:0000314"/>
    <property type="project" value="UniProtKB"/>
</dbReference>
<dbReference type="GO" id="GO:0051117">
    <property type="term" value="F:ATPase binding"/>
    <property type="evidence" value="ECO:0000353"/>
    <property type="project" value="BHF-UCL"/>
</dbReference>
<dbReference type="GO" id="GO:0031072">
    <property type="term" value="F:heat shock protein binding"/>
    <property type="evidence" value="ECO:0000353"/>
    <property type="project" value="UniProtKB"/>
</dbReference>
<dbReference type="GO" id="GO:0030544">
    <property type="term" value="F:Hsp70 protein binding"/>
    <property type="evidence" value="ECO:0000353"/>
    <property type="project" value="BHF-UCL"/>
</dbReference>
<dbReference type="GO" id="GO:0008276">
    <property type="term" value="F:protein methyltransferase activity"/>
    <property type="evidence" value="ECO:0000314"/>
    <property type="project" value="UniProtKB"/>
</dbReference>
<dbReference type="GO" id="GO:0016279">
    <property type="term" value="F:protein-lysine N-methyltransferase activity"/>
    <property type="evidence" value="ECO:0000314"/>
    <property type="project" value="UniProtKB"/>
</dbReference>
<dbReference type="GO" id="GO:1903645">
    <property type="term" value="P:negative regulation of chaperone-mediated protein folding"/>
    <property type="evidence" value="ECO:0000314"/>
    <property type="project" value="BHF-UCL"/>
</dbReference>
<dbReference type="GO" id="GO:0006479">
    <property type="term" value="P:protein methylation"/>
    <property type="evidence" value="ECO:0000314"/>
    <property type="project" value="UniProtKB"/>
</dbReference>
<dbReference type="FunFam" id="3.40.50.150:FF:000137">
    <property type="entry name" value="protein N-lysine methyltransferase METTL21A"/>
    <property type="match status" value="1"/>
</dbReference>
<dbReference type="Gene3D" id="3.40.50.150">
    <property type="entry name" value="Vaccinia Virus protein VP39"/>
    <property type="match status" value="1"/>
</dbReference>
<dbReference type="InterPro" id="IPR019410">
    <property type="entry name" value="Methyltransf_16"/>
</dbReference>
<dbReference type="InterPro" id="IPR029063">
    <property type="entry name" value="SAM-dependent_MTases_sf"/>
</dbReference>
<dbReference type="PANTHER" id="PTHR14614">
    <property type="entry name" value="HEPATOCELLULAR CARCINOMA-ASSOCIATED ANTIGEN"/>
    <property type="match status" value="1"/>
</dbReference>
<dbReference type="PANTHER" id="PTHR14614:SF14">
    <property type="entry name" value="PROTEIN N-LYSINE METHYLTRANSFERASE METTL21A"/>
    <property type="match status" value="1"/>
</dbReference>
<dbReference type="Pfam" id="PF10294">
    <property type="entry name" value="Methyltransf_16"/>
    <property type="match status" value="1"/>
</dbReference>
<dbReference type="SUPFAM" id="SSF53335">
    <property type="entry name" value="S-adenosyl-L-methionine-dependent methyltransferases"/>
    <property type="match status" value="1"/>
</dbReference>
<name>MT21A_HUMAN</name>
<gene>
    <name type="primary">METTL21A</name>
    <name type="synonym">FAM119A</name>
    <name evidence="10" type="synonym">HCA557B</name>
</gene>
<reference key="1">
    <citation type="submission" date="2001-12" db="EMBL/GenBank/DDBJ databases">
        <title>HCA557b, a transcription factor associated with hepatocellular carcinoma.</title>
        <authorList>
            <person name="Dong X.-Y."/>
            <person name="Chen W.-F."/>
        </authorList>
    </citation>
    <scope>NUCLEOTIDE SEQUENCE [MRNA] (ISOFORM 1)</scope>
    <scope>VARIANT ILE-192</scope>
</reference>
<reference key="2">
    <citation type="journal article" date="2004" name="Nat. Genet.">
        <title>Complete sequencing and characterization of 21,243 full-length human cDNAs.</title>
        <authorList>
            <person name="Ota T."/>
            <person name="Suzuki Y."/>
            <person name="Nishikawa T."/>
            <person name="Otsuki T."/>
            <person name="Sugiyama T."/>
            <person name="Irie R."/>
            <person name="Wakamatsu A."/>
            <person name="Hayashi K."/>
            <person name="Sato H."/>
            <person name="Nagai K."/>
            <person name="Kimura K."/>
            <person name="Makita H."/>
            <person name="Sekine M."/>
            <person name="Obayashi M."/>
            <person name="Nishi T."/>
            <person name="Shibahara T."/>
            <person name="Tanaka T."/>
            <person name="Ishii S."/>
            <person name="Yamamoto J."/>
            <person name="Saito K."/>
            <person name="Kawai Y."/>
            <person name="Isono Y."/>
            <person name="Nakamura Y."/>
            <person name="Nagahari K."/>
            <person name="Murakami K."/>
            <person name="Yasuda T."/>
            <person name="Iwayanagi T."/>
            <person name="Wagatsuma M."/>
            <person name="Shiratori A."/>
            <person name="Sudo H."/>
            <person name="Hosoiri T."/>
            <person name="Kaku Y."/>
            <person name="Kodaira H."/>
            <person name="Kondo H."/>
            <person name="Sugawara M."/>
            <person name="Takahashi M."/>
            <person name="Kanda K."/>
            <person name="Yokoi T."/>
            <person name="Furuya T."/>
            <person name="Kikkawa E."/>
            <person name="Omura Y."/>
            <person name="Abe K."/>
            <person name="Kamihara K."/>
            <person name="Katsuta N."/>
            <person name="Sato K."/>
            <person name="Tanikawa M."/>
            <person name="Yamazaki M."/>
            <person name="Ninomiya K."/>
            <person name="Ishibashi T."/>
            <person name="Yamashita H."/>
            <person name="Murakawa K."/>
            <person name="Fujimori K."/>
            <person name="Tanai H."/>
            <person name="Kimata M."/>
            <person name="Watanabe M."/>
            <person name="Hiraoka S."/>
            <person name="Chiba Y."/>
            <person name="Ishida S."/>
            <person name="Ono Y."/>
            <person name="Takiguchi S."/>
            <person name="Watanabe S."/>
            <person name="Yosida M."/>
            <person name="Hotuta T."/>
            <person name="Kusano J."/>
            <person name="Kanehori K."/>
            <person name="Takahashi-Fujii A."/>
            <person name="Hara H."/>
            <person name="Tanase T.-O."/>
            <person name="Nomura Y."/>
            <person name="Togiya S."/>
            <person name="Komai F."/>
            <person name="Hara R."/>
            <person name="Takeuchi K."/>
            <person name="Arita M."/>
            <person name="Imose N."/>
            <person name="Musashino K."/>
            <person name="Yuuki H."/>
            <person name="Oshima A."/>
            <person name="Sasaki N."/>
            <person name="Aotsuka S."/>
            <person name="Yoshikawa Y."/>
            <person name="Matsunawa H."/>
            <person name="Ichihara T."/>
            <person name="Shiohata N."/>
            <person name="Sano S."/>
            <person name="Moriya S."/>
            <person name="Momiyama H."/>
            <person name="Satoh N."/>
            <person name="Takami S."/>
            <person name="Terashima Y."/>
            <person name="Suzuki O."/>
            <person name="Nakagawa S."/>
            <person name="Senoh A."/>
            <person name="Mizoguchi H."/>
            <person name="Goto Y."/>
            <person name="Shimizu F."/>
            <person name="Wakebe H."/>
            <person name="Hishigaki H."/>
            <person name="Watanabe T."/>
            <person name="Sugiyama A."/>
            <person name="Takemoto M."/>
            <person name="Kawakami B."/>
            <person name="Yamazaki M."/>
            <person name="Watanabe K."/>
            <person name="Kumagai A."/>
            <person name="Itakura S."/>
            <person name="Fukuzumi Y."/>
            <person name="Fujimori Y."/>
            <person name="Komiyama M."/>
            <person name="Tashiro H."/>
            <person name="Tanigami A."/>
            <person name="Fujiwara T."/>
            <person name="Ono T."/>
            <person name="Yamada K."/>
            <person name="Fujii Y."/>
            <person name="Ozaki K."/>
            <person name="Hirao M."/>
            <person name="Ohmori Y."/>
            <person name="Kawabata A."/>
            <person name="Hikiji T."/>
            <person name="Kobatake N."/>
            <person name="Inagaki H."/>
            <person name="Ikema Y."/>
            <person name="Okamoto S."/>
            <person name="Okitani R."/>
            <person name="Kawakami T."/>
            <person name="Noguchi S."/>
            <person name="Itoh T."/>
            <person name="Shigeta K."/>
            <person name="Senba T."/>
            <person name="Matsumura K."/>
            <person name="Nakajima Y."/>
            <person name="Mizuno T."/>
            <person name="Morinaga M."/>
            <person name="Sasaki M."/>
            <person name="Togashi T."/>
            <person name="Oyama M."/>
            <person name="Hata H."/>
            <person name="Watanabe M."/>
            <person name="Komatsu T."/>
            <person name="Mizushima-Sugano J."/>
            <person name="Satoh T."/>
            <person name="Shirai Y."/>
            <person name="Takahashi Y."/>
            <person name="Nakagawa K."/>
            <person name="Okumura K."/>
            <person name="Nagase T."/>
            <person name="Nomura N."/>
            <person name="Kikuchi H."/>
            <person name="Masuho Y."/>
            <person name="Yamashita R."/>
            <person name="Nakai K."/>
            <person name="Yada T."/>
            <person name="Nakamura Y."/>
            <person name="Ohara O."/>
            <person name="Isogai T."/>
            <person name="Sugano S."/>
        </authorList>
    </citation>
    <scope>NUCLEOTIDE SEQUENCE [LARGE SCALE MRNA] (ISOFORM 1)</scope>
    <scope>VARIANT ILE-192</scope>
    <source>
        <tissue>Thymus</tissue>
    </source>
</reference>
<reference key="3">
    <citation type="journal article" date="2005" name="Nature">
        <title>Generation and annotation of the DNA sequences of human chromosomes 2 and 4.</title>
        <authorList>
            <person name="Hillier L.W."/>
            <person name="Graves T.A."/>
            <person name="Fulton R.S."/>
            <person name="Fulton L.A."/>
            <person name="Pepin K.H."/>
            <person name="Minx P."/>
            <person name="Wagner-McPherson C."/>
            <person name="Layman D."/>
            <person name="Wylie K."/>
            <person name="Sekhon M."/>
            <person name="Becker M.C."/>
            <person name="Fewell G.A."/>
            <person name="Delehaunty K.D."/>
            <person name="Miner T.L."/>
            <person name="Nash W.E."/>
            <person name="Kremitzki C."/>
            <person name="Oddy L."/>
            <person name="Du H."/>
            <person name="Sun H."/>
            <person name="Bradshaw-Cordum H."/>
            <person name="Ali J."/>
            <person name="Carter J."/>
            <person name="Cordes M."/>
            <person name="Harris A."/>
            <person name="Isak A."/>
            <person name="van Brunt A."/>
            <person name="Nguyen C."/>
            <person name="Du F."/>
            <person name="Courtney L."/>
            <person name="Kalicki J."/>
            <person name="Ozersky P."/>
            <person name="Abbott S."/>
            <person name="Armstrong J."/>
            <person name="Belter E.A."/>
            <person name="Caruso L."/>
            <person name="Cedroni M."/>
            <person name="Cotton M."/>
            <person name="Davidson T."/>
            <person name="Desai A."/>
            <person name="Elliott G."/>
            <person name="Erb T."/>
            <person name="Fronick C."/>
            <person name="Gaige T."/>
            <person name="Haakenson W."/>
            <person name="Haglund K."/>
            <person name="Holmes A."/>
            <person name="Harkins R."/>
            <person name="Kim K."/>
            <person name="Kruchowski S.S."/>
            <person name="Strong C.M."/>
            <person name="Grewal N."/>
            <person name="Goyea E."/>
            <person name="Hou S."/>
            <person name="Levy A."/>
            <person name="Martinka S."/>
            <person name="Mead K."/>
            <person name="McLellan M.D."/>
            <person name="Meyer R."/>
            <person name="Randall-Maher J."/>
            <person name="Tomlinson C."/>
            <person name="Dauphin-Kohlberg S."/>
            <person name="Kozlowicz-Reilly A."/>
            <person name="Shah N."/>
            <person name="Swearengen-Shahid S."/>
            <person name="Snider J."/>
            <person name="Strong J.T."/>
            <person name="Thompson J."/>
            <person name="Yoakum M."/>
            <person name="Leonard S."/>
            <person name="Pearman C."/>
            <person name="Trani L."/>
            <person name="Radionenko M."/>
            <person name="Waligorski J.E."/>
            <person name="Wang C."/>
            <person name="Rock S.M."/>
            <person name="Tin-Wollam A.-M."/>
            <person name="Maupin R."/>
            <person name="Latreille P."/>
            <person name="Wendl M.C."/>
            <person name="Yang S.-P."/>
            <person name="Pohl C."/>
            <person name="Wallis J.W."/>
            <person name="Spieth J."/>
            <person name="Bieri T.A."/>
            <person name="Berkowicz N."/>
            <person name="Nelson J.O."/>
            <person name="Osborne J."/>
            <person name="Ding L."/>
            <person name="Meyer R."/>
            <person name="Sabo A."/>
            <person name="Shotland Y."/>
            <person name="Sinha P."/>
            <person name="Wohldmann P.E."/>
            <person name="Cook L.L."/>
            <person name="Hickenbotham M.T."/>
            <person name="Eldred J."/>
            <person name="Williams D."/>
            <person name="Jones T.A."/>
            <person name="She X."/>
            <person name="Ciccarelli F.D."/>
            <person name="Izaurralde E."/>
            <person name="Taylor J."/>
            <person name="Schmutz J."/>
            <person name="Myers R.M."/>
            <person name="Cox D.R."/>
            <person name="Huang X."/>
            <person name="McPherson J.D."/>
            <person name="Mardis E.R."/>
            <person name="Clifton S.W."/>
            <person name="Warren W.C."/>
            <person name="Chinwalla A.T."/>
            <person name="Eddy S.R."/>
            <person name="Marra M.A."/>
            <person name="Ovcharenko I."/>
            <person name="Furey T.S."/>
            <person name="Miller W."/>
            <person name="Eichler E.E."/>
            <person name="Bork P."/>
            <person name="Suyama M."/>
            <person name="Torrents D."/>
            <person name="Waterston R.H."/>
            <person name="Wilson R.K."/>
        </authorList>
    </citation>
    <scope>NUCLEOTIDE SEQUENCE [LARGE SCALE GENOMIC DNA]</scope>
</reference>
<reference key="4">
    <citation type="journal article" date="2004" name="Genome Res.">
        <title>The status, quality, and expansion of the NIH full-length cDNA project: the Mammalian Gene Collection (MGC).</title>
        <authorList>
            <consortium name="The MGC Project Team"/>
        </authorList>
    </citation>
    <scope>NUCLEOTIDE SEQUENCE [LARGE SCALE MRNA] (ISOFORMS 1 AND 2)</scope>
    <scope>VARIANT ILE-192</scope>
    <source>
        <tissue>Brain</tissue>
        <tissue>Lymph</tissue>
    </source>
</reference>
<reference key="5">
    <citation type="journal article" date="2012" name="Nat. Commun.">
        <title>Lysine methylation of VCP by a member of a novel human protein methyltransferase family.</title>
        <authorList>
            <person name="Kernstock S."/>
            <person name="Davydova E."/>
            <person name="Jakobsson M."/>
            <person name="Moen A."/>
            <person name="Pettersen S."/>
            <person name="Maelandsmo G.M."/>
            <person name="Egge-Jacobsen W."/>
            <person name="Falnes P.O."/>
        </authorList>
    </citation>
    <scope>FUNCTION</scope>
    <scope>MUTAGENESIS OF ASP-94</scope>
    <scope>CATALYTIC ACTIVITY</scope>
</reference>
<reference key="6">
    <citation type="journal article" date="2013" name="J. Biol. Chem.">
        <title>Identification and characterization of a novel human methyltransferase modulating Hsp70 function through lysine methylation.</title>
        <authorList>
            <person name="Jakobsson M.E."/>
            <person name="Moen A."/>
            <person name="Bousset L."/>
            <person name="Egge-Jacobsen W."/>
            <person name="Kernstock S."/>
            <person name="Melki R."/>
            <person name="Falnes P.O."/>
        </authorList>
    </citation>
    <scope>FUNCTION</scope>
    <scope>SUBUNIT</scope>
    <scope>CATALYTIC ACTIVITY</scope>
</reference>
<reference key="7">
    <citation type="journal article" date="2013" name="PLoS Genet.">
        <title>A newly uncovered group of distantly related lysine methyltransferases preferentially interact with molecular chaperones to regulate their activity.</title>
        <authorList>
            <person name="Cloutier P."/>
            <person name="Lavallee-Adam M."/>
            <person name="Faubert D."/>
            <person name="Blanchette M."/>
            <person name="Coulombe B."/>
        </authorList>
    </citation>
    <scope>FUNCTION</scope>
    <scope>INTERACTION WITH HSP70 FAMILY MEMBERS</scope>
    <scope>SUBCELLULAR LOCATION</scope>
    <scope>CATALYTIC ACTIVITY</scope>
</reference>
<reference key="8">
    <citation type="submission" date="2013-07" db="PDB data bank">
        <title>The crystal structure of human methyltransferase-like protein 21A in complex with SAH.</title>
        <authorList>
            <consortium name="Structural genomics consortium (SGC)"/>
        </authorList>
    </citation>
    <scope>X-RAY CRYSTALLOGRAPHY (2.28 ANGSTROMS) OF 8-218 IN COMPLEX WITH S-ADENOSYL-L-HOMOCYSTEINE</scope>
</reference>
<keyword id="KW-0002">3D-structure</keyword>
<keyword id="KW-0025">Alternative splicing</keyword>
<keyword id="KW-0963">Cytoplasm</keyword>
<keyword id="KW-0489">Methyltransferase</keyword>
<keyword id="KW-1267">Proteomics identification</keyword>
<keyword id="KW-1185">Reference proteome</keyword>
<keyword id="KW-0949">S-adenosyl-L-methionine</keyword>
<keyword id="KW-0808">Transferase</keyword>
<proteinExistence type="evidence at protein level"/>
<accession>Q8WXB1</accession>
<accession>Q53RV0</accession>
<accession>Q8N1Z9</accession>
<accession>Q96GH6</accession>
<sequence>MALVPYEETTEFGLQKFHKPLATFSFANHTIQIRQDWRHLGVAAVVWDAAIVLSTYLEMGAVELRGRSAVELGAGTGLVGIVAALLGAHVTITDRKVALEFLKSNVQANLPPHIQTKTVVKELTWGQNLGSFSPGEFDLILGADIIYLEETFTDLLQTLEHLCSNHSVILLACRIRYERDNNFLAMLERQFTVRKVHYDPEKDVHIYEAQKRNQKEDL</sequence>